<evidence type="ECO:0000255" key="1">
    <source>
        <dbReference type="HAMAP-Rule" id="MF_00340"/>
    </source>
</evidence>
<evidence type="ECO:0000305" key="2"/>
<evidence type="ECO:0007829" key="3">
    <source>
        <dbReference type="PDB" id="8A57"/>
    </source>
</evidence>
<evidence type="ECO:0007829" key="4">
    <source>
        <dbReference type="PDB" id="8A5I"/>
    </source>
</evidence>
<dbReference type="EMBL" id="AL591982">
    <property type="protein sequence ID" value="CAD00125.1"/>
    <property type="molecule type" value="Genomic_DNA"/>
</dbReference>
<dbReference type="PIR" id="AG1330">
    <property type="entry name" value="AG1330"/>
</dbReference>
<dbReference type="PDB" id="7NHN">
    <property type="method" value="EM"/>
    <property type="resolution" value="2.90 A"/>
    <property type="chains" value="5=1-57"/>
</dbReference>
<dbReference type="PDB" id="8A57">
    <property type="method" value="EM"/>
    <property type="resolution" value="2.30 A"/>
    <property type="chains" value="5=1-57"/>
</dbReference>
<dbReference type="PDB" id="8A5I">
    <property type="method" value="EM"/>
    <property type="resolution" value="2.30 A"/>
    <property type="chains" value="5=1-57"/>
</dbReference>
<dbReference type="PDB" id="8A63">
    <property type="method" value="EM"/>
    <property type="resolution" value="3.10 A"/>
    <property type="chains" value="5=1-57"/>
</dbReference>
<dbReference type="PDBsum" id="7NHN"/>
<dbReference type="PDBsum" id="8A57"/>
<dbReference type="PDBsum" id="8A5I"/>
<dbReference type="PDBsum" id="8A63"/>
<dbReference type="EMDB" id="EMD-12334"/>
<dbReference type="EMDB" id="EMD-15161"/>
<dbReference type="EMDB" id="EMD-15175"/>
<dbReference type="EMDB" id="EMD-15204"/>
<dbReference type="SMR" id="P66207"/>
<dbReference type="STRING" id="169963.gene:17594732"/>
<dbReference type="PaxDb" id="169963-lmo2047"/>
<dbReference type="EnsemblBacteria" id="CAD00125">
    <property type="protein sequence ID" value="CAD00125"/>
    <property type="gene ID" value="CAD00125"/>
</dbReference>
<dbReference type="KEGG" id="lmo:lmo2047"/>
<dbReference type="PATRIC" id="fig|169963.11.peg.2095"/>
<dbReference type="eggNOG" id="COG0333">
    <property type="taxonomic scope" value="Bacteria"/>
</dbReference>
<dbReference type="HOGENOM" id="CLU_129084_1_3_9"/>
<dbReference type="OrthoDB" id="9812874at2"/>
<dbReference type="PhylomeDB" id="P66207"/>
<dbReference type="BioCyc" id="LMON169963:LMO2047-MONOMER"/>
<dbReference type="Proteomes" id="UP000000817">
    <property type="component" value="Chromosome"/>
</dbReference>
<dbReference type="GO" id="GO:0022625">
    <property type="term" value="C:cytosolic large ribosomal subunit"/>
    <property type="evidence" value="ECO:0000318"/>
    <property type="project" value="GO_Central"/>
</dbReference>
<dbReference type="GO" id="GO:0003735">
    <property type="term" value="F:structural constituent of ribosome"/>
    <property type="evidence" value="ECO:0000318"/>
    <property type="project" value="GO_Central"/>
</dbReference>
<dbReference type="GO" id="GO:0006412">
    <property type="term" value="P:translation"/>
    <property type="evidence" value="ECO:0007669"/>
    <property type="project" value="UniProtKB-UniRule"/>
</dbReference>
<dbReference type="HAMAP" id="MF_00340">
    <property type="entry name" value="Ribosomal_bL32"/>
    <property type="match status" value="1"/>
</dbReference>
<dbReference type="InterPro" id="IPR002677">
    <property type="entry name" value="Ribosomal_bL32"/>
</dbReference>
<dbReference type="InterPro" id="IPR044957">
    <property type="entry name" value="Ribosomal_bL32_bact"/>
</dbReference>
<dbReference type="InterPro" id="IPR011332">
    <property type="entry name" value="Ribosomal_zn-bd"/>
</dbReference>
<dbReference type="NCBIfam" id="TIGR01031">
    <property type="entry name" value="rpmF_bact"/>
    <property type="match status" value="1"/>
</dbReference>
<dbReference type="PANTHER" id="PTHR35534">
    <property type="entry name" value="50S RIBOSOMAL PROTEIN L32"/>
    <property type="match status" value="1"/>
</dbReference>
<dbReference type="PANTHER" id="PTHR35534:SF2">
    <property type="entry name" value="LARGE RIBOSOMAL SUBUNIT PROTEIN BL32"/>
    <property type="match status" value="1"/>
</dbReference>
<dbReference type="Pfam" id="PF01783">
    <property type="entry name" value="Ribosomal_L32p"/>
    <property type="match status" value="1"/>
</dbReference>
<dbReference type="SUPFAM" id="SSF57829">
    <property type="entry name" value="Zn-binding ribosomal proteins"/>
    <property type="match status" value="1"/>
</dbReference>
<feature type="chain" id="PRO_0000172361" description="Large ribosomal subunit protein bL32B">
    <location>
        <begin position="1"/>
        <end position="57"/>
    </location>
</feature>
<feature type="helix" evidence="3">
    <location>
        <begin position="10"/>
        <end position="16"/>
    </location>
</feature>
<feature type="helix" evidence="4">
    <location>
        <begin position="17"/>
        <end position="19"/>
    </location>
</feature>
<feature type="strand" evidence="3">
    <location>
        <begin position="27"/>
        <end position="29"/>
    </location>
</feature>
<feature type="strand" evidence="3">
    <location>
        <begin position="31"/>
        <end position="33"/>
    </location>
</feature>
<feature type="strand" evidence="3">
    <location>
        <begin position="35"/>
        <end position="38"/>
    </location>
</feature>
<feature type="turn" evidence="3">
    <location>
        <begin position="44"/>
        <end position="47"/>
    </location>
</feature>
<feature type="strand" evidence="4">
    <location>
        <begin position="50"/>
        <end position="52"/>
    </location>
</feature>
<protein>
    <recommendedName>
        <fullName evidence="1">Large ribosomal subunit protein bL32B</fullName>
    </recommendedName>
    <alternativeName>
        <fullName evidence="2">50S ribosomal protein L32 2</fullName>
    </alternativeName>
</protein>
<proteinExistence type="evidence at protein level"/>
<reference key="1">
    <citation type="journal article" date="2001" name="Science">
        <title>Comparative genomics of Listeria species.</title>
        <authorList>
            <person name="Glaser P."/>
            <person name="Frangeul L."/>
            <person name="Buchrieser C."/>
            <person name="Rusniok C."/>
            <person name="Amend A."/>
            <person name="Baquero F."/>
            <person name="Berche P."/>
            <person name="Bloecker H."/>
            <person name="Brandt P."/>
            <person name="Chakraborty T."/>
            <person name="Charbit A."/>
            <person name="Chetouani F."/>
            <person name="Couve E."/>
            <person name="de Daruvar A."/>
            <person name="Dehoux P."/>
            <person name="Domann E."/>
            <person name="Dominguez-Bernal G."/>
            <person name="Duchaud E."/>
            <person name="Durant L."/>
            <person name="Dussurget O."/>
            <person name="Entian K.-D."/>
            <person name="Fsihi H."/>
            <person name="Garcia-del Portillo F."/>
            <person name="Garrido P."/>
            <person name="Gautier L."/>
            <person name="Goebel W."/>
            <person name="Gomez-Lopez N."/>
            <person name="Hain T."/>
            <person name="Hauf J."/>
            <person name="Jackson D."/>
            <person name="Jones L.-M."/>
            <person name="Kaerst U."/>
            <person name="Kreft J."/>
            <person name="Kuhn M."/>
            <person name="Kunst F."/>
            <person name="Kurapkat G."/>
            <person name="Madueno E."/>
            <person name="Maitournam A."/>
            <person name="Mata Vicente J."/>
            <person name="Ng E."/>
            <person name="Nedjari H."/>
            <person name="Nordsiek G."/>
            <person name="Novella S."/>
            <person name="de Pablos B."/>
            <person name="Perez-Diaz J.-C."/>
            <person name="Purcell R."/>
            <person name="Remmel B."/>
            <person name="Rose M."/>
            <person name="Schlueter T."/>
            <person name="Simoes N."/>
            <person name="Tierrez A."/>
            <person name="Vazquez-Boland J.-A."/>
            <person name="Voss H."/>
            <person name="Wehland J."/>
            <person name="Cossart P."/>
        </authorList>
    </citation>
    <scope>NUCLEOTIDE SEQUENCE [LARGE SCALE GENOMIC DNA]</scope>
    <source>
        <strain>ATCC BAA-679 / EGD-e</strain>
    </source>
</reference>
<comment type="similarity">
    <text evidence="2">Belongs to the bacterial ribosomal protein bL32 family.</text>
</comment>
<gene>
    <name type="primary">rpmF2</name>
    <name type="ordered locus">lmo2047</name>
</gene>
<keyword id="KW-0002">3D-structure</keyword>
<keyword id="KW-1185">Reference proteome</keyword>
<keyword id="KW-0687">Ribonucleoprotein</keyword>
<keyword id="KW-0689">Ribosomal protein</keyword>
<accession>P66207</accession>
<accession>Q929X0</accession>
<name>RL322_LISMO</name>
<sequence length="57" mass="6519">MAVPFRRTSKAKKRKRRTHVKLQLPGMNECSNCGEYRLSHHVCPECGQYDGKDVANS</sequence>
<organism>
    <name type="scientific">Listeria monocytogenes serovar 1/2a (strain ATCC BAA-679 / EGD-e)</name>
    <dbReference type="NCBI Taxonomy" id="169963"/>
    <lineage>
        <taxon>Bacteria</taxon>
        <taxon>Bacillati</taxon>
        <taxon>Bacillota</taxon>
        <taxon>Bacilli</taxon>
        <taxon>Bacillales</taxon>
        <taxon>Listeriaceae</taxon>
        <taxon>Listeria</taxon>
    </lineage>
</organism>